<sequence length="795" mass="87479">MKKLLIASLLFGTTTTVFAAPFVAKDIRVDGVQGDLEQQIRASLPVRAGQRVTDNDVANIVRSLFVSGRFDDVKAHQEGDVLVVSVVAKSIISDVKIKGNSIIPTEALKQNLDANGFKVGDVLIREKLNEFAKSVKEHYASVGRYNATVEPIVNTLPNNRAEILIQINEDDKAKLASLTFKGNESVSSSTLQEQMELQPDSWWKLWGNKFEGAQFEKDLQSIRDYYLNNGYAKAQITKTDVQLNDEKTKVNVTIDVNEGLQYDLRSARIIGNLGGMSAELEPLLSALHLNDTFRRSDIADVENAIKAKLGERGYGSATVNSVPDFDDANKTLAITLVVDAGRRLTVRQLRFEGNTVSADSTLRQEMRQQEGTWYNSQLVELGKIRLDRTGFFETVENRIDPINGSNDEVDVVYKVKERNTGSINFGIGYGTESGISYQASVKQDNFLGTGAAVSIAGTKNDYGTSVNLGYTEPYFTKDGVSLGGNVFFENYDNSKSDTSSNYKRTTYGSNVTLGFPVNENNSYYVGLGHTYNKISNFALEYNRNLYIQSMKFKGNGIKTNDFDFSFGWNYNSLNRGYFPTKGVKASLGGRVTIPGSDNKYYKLSADVQGFYPLDRDHLWVVSAKASAGYANGFGNKRLPFYQTYTAGGIGSLRGFAYGSIGPNAIYAEHGNGNGTFKKISSDVIGGNAITTASAELIVPTPFVSDKSQNTVRTSLFVDAASVWNTKWKSDKSGLDNNVLKSLPDYGKSSRIRASTGVGFQWQSPIGPLVFSYAKPIKKYENDDVEQFQFSIGGSF</sequence>
<dbReference type="EMBL" id="L42023">
    <property type="protein sequence ID" value="AAC22575.1"/>
    <property type="molecule type" value="Genomic_DNA"/>
</dbReference>
<dbReference type="RefSeq" id="NP_439077.1">
    <property type="nucleotide sequence ID" value="NC_000907.1"/>
</dbReference>
<dbReference type="PDB" id="6J09">
    <property type="method" value="X-ray"/>
    <property type="resolution" value="3.00 A"/>
    <property type="chains" value="A=20-348"/>
</dbReference>
<dbReference type="PDBsum" id="6J09"/>
<dbReference type="SMR" id="P44935"/>
<dbReference type="STRING" id="71421.HI_0917"/>
<dbReference type="EnsemblBacteria" id="AAC22575">
    <property type="protein sequence ID" value="AAC22575"/>
    <property type="gene ID" value="HI_0917"/>
</dbReference>
<dbReference type="KEGG" id="hin:HI_0917"/>
<dbReference type="PATRIC" id="fig|71421.8.peg.958"/>
<dbReference type="eggNOG" id="COG4775">
    <property type="taxonomic scope" value="Bacteria"/>
</dbReference>
<dbReference type="HOGENOM" id="CLU_007664_1_0_6"/>
<dbReference type="OrthoDB" id="9803054at2"/>
<dbReference type="PhylomeDB" id="P44935"/>
<dbReference type="BioCyc" id="HINF71421:G1GJ1-956-MONOMER"/>
<dbReference type="Proteomes" id="UP000000579">
    <property type="component" value="Chromosome"/>
</dbReference>
<dbReference type="GO" id="GO:1990063">
    <property type="term" value="C:Bam protein complex"/>
    <property type="evidence" value="ECO:0000318"/>
    <property type="project" value="GO_Central"/>
</dbReference>
<dbReference type="GO" id="GO:0043165">
    <property type="term" value="P:Gram-negative-bacterium-type cell outer membrane assembly"/>
    <property type="evidence" value="ECO:0000318"/>
    <property type="project" value="GO_Central"/>
</dbReference>
<dbReference type="GO" id="GO:0051205">
    <property type="term" value="P:protein insertion into membrane"/>
    <property type="evidence" value="ECO:0000318"/>
    <property type="project" value="GO_Central"/>
</dbReference>
<dbReference type="FunFam" id="2.40.160.50:FF:000001">
    <property type="entry name" value="Outer membrane protein assembly factor BamA"/>
    <property type="match status" value="1"/>
</dbReference>
<dbReference type="FunFam" id="3.10.20.310:FF:000001">
    <property type="entry name" value="Outer membrane protein assembly factor BamA"/>
    <property type="match status" value="1"/>
</dbReference>
<dbReference type="FunFam" id="3.10.20.310:FF:000024">
    <property type="entry name" value="Outer membrane protein assembly factor BamA"/>
    <property type="match status" value="1"/>
</dbReference>
<dbReference type="Gene3D" id="3.10.20.310">
    <property type="entry name" value="membrane protein fhac"/>
    <property type="match status" value="5"/>
</dbReference>
<dbReference type="Gene3D" id="2.40.160.50">
    <property type="entry name" value="membrane protein fhac: a member of the omp85/tpsb transporter family"/>
    <property type="match status" value="1"/>
</dbReference>
<dbReference type="HAMAP" id="MF_01430">
    <property type="entry name" value="OM_assembly_BamA"/>
    <property type="match status" value="1"/>
</dbReference>
<dbReference type="InterPro" id="IPR000184">
    <property type="entry name" value="Bac_surfAg_D15"/>
</dbReference>
<dbReference type="InterPro" id="IPR010827">
    <property type="entry name" value="BamA/TamA_POTRA"/>
</dbReference>
<dbReference type="InterPro" id="IPR039910">
    <property type="entry name" value="D15-like"/>
</dbReference>
<dbReference type="InterPro" id="IPR023707">
    <property type="entry name" value="OM_assembly_BamA"/>
</dbReference>
<dbReference type="InterPro" id="IPR034746">
    <property type="entry name" value="POTRA"/>
</dbReference>
<dbReference type="NCBIfam" id="TIGR03303">
    <property type="entry name" value="OM_YaeT"/>
    <property type="match status" value="1"/>
</dbReference>
<dbReference type="PANTHER" id="PTHR12815:SF23">
    <property type="entry name" value="OUTER MEMBRANE PROTEIN ASSEMBLY FACTOR BAMA"/>
    <property type="match status" value="1"/>
</dbReference>
<dbReference type="PANTHER" id="PTHR12815">
    <property type="entry name" value="SORTING AND ASSEMBLY MACHINERY SAMM50 PROTEIN FAMILY MEMBER"/>
    <property type="match status" value="1"/>
</dbReference>
<dbReference type="Pfam" id="PF01103">
    <property type="entry name" value="Omp85"/>
    <property type="match status" value="1"/>
</dbReference>
<dbReference type="Pfam" id="PF07244">
    <property type="entry name" value="POTRA"/>
    <property type="match status" value="4"/>
</dbReference>
<dbReference type="PIRSF" id="PIRSF006076">
    <property type="entry name" value="OM_assembly_OMP85"/>
    <property type="match status" value="1"/>
</dbReference>
<dbReference type="PROSITE" id="PS51779">
    <property type="entry name" value="POTRA"/>
    <property type="match status" value="5"/>
</dbReference>
<accession>P44935</accession>
<proteinExistence type="evidence at protein level"/>
<evidence type="ECO:0000255" key="1">
    <source>
        <dbReference type="HAMAP-Rule" id="MF_01430"/>
    </source>
</evidence>
<evidence type="ECO:0000255" key="2">
    <source>
        <dbReference type="PROSITE-ProRule" id="PRU01115"/>
    </source>
</evidence>
<evidence type="ECO:0007829" key="3">
    <source>
        <dbReference type="PDB" id="6J09"/>
    </source>
</evidence>
<reference key="1">
    <citation type="journal article" date="1995" name="Science">
        <title>Whole-genome random sequencing and assembly of Haemophilus influenzae Rd.</title>
        <authorList>
            <person name="Fleischmann R.D."/>
            <person name="Adams M.D."/>
            <person name="White O."/>
            <person name="Clayton R.A."/>
            <person name="Kirkness E.F."/>
            <person name="Kerlavage A.R."/>
            <person name="Bult C.J."/>
            <person name="Tomb J.-F."/>
            <person name="Dougherty B.A."/>
            <person name="Merrick J.M."/>
            <person name="McKenney K."/>
            <person name="Sutton G.G."/>
            <person name="FitzHugh W."/>
            <person name="Fields C.A."/>
            <person name="Gocayne J.D."/>
            <person name="Scott J.D."/>
            <person name="Shirley R."/>
            <person name="Liu L.-I."/>
            <person name="Glodek A."/>
            <person name="Kelley J.M."/>
            <person name="Weidman J.F."/>
            <person name="Phillips C.A."/>
            <person name="Spriggs T."/>
            <person name="Hedblom E."/>
            <person name="Cotton M.D."/>
            <person name="Utterback T.R."/>
            <person name="Hanna M.C."/>
            <person name="Nguyen D.T."/>
            <person name="Saudek D.M."/>
            <person name="Brandon R.C."/>
            <person name="Fine L.D."/>
            <person name="Fritchman J.L."/>
            <person name="Fuhrmann J.L."/>
            <person name="Geoghagen N.S.M."/>
            <person name="Gnehm C.L."/>
            <person name="McDonald L.A."/>
            <person name="Small K.V."/>
            <person name="Fraser C.M."/>
            <person name="Smith H.O."/>
            <person name="Venter J.C."/>
        </authorList>
    </citation>
    <scope>NUCLEOTIDE SEQUENCE [LARGE SCALE GENOMIC DNA]</scope>
    <source>
        <strain>ATCC 51907 / DSM 11121 / KW20 / Rd</strain>
    </source>
</reference>
<keyword id="KW-0002">3D-structure</keyword>
<keyword id="KW-0998">Cell outer membrane</keyword>
<keyword id="KW-0472">Membrane</keyword>
<keyword id="KW-1185">Reference proteome</keyword>
<keyword id="KW-0677">Repeat</keyword>
<keyword id="KW-0732">Signal</keyword>
<keyword id="KW-0812">Transmembrane</keyword>
<keyword id="KW-1134">Transmembrane beta strand</keyword>
<comment type="function">
    <text evidence="1">Part of the outer membrane protein assembly complex, which is involved in assembly and insertion of beta-barrel proteins into the outer membrane.</text>
</comment>
<comment type="subunit">
    <text evidence="1">Part of the Bam complex.</text>
</comment>
<comment type="subcellular location">
    <subcellularLocation>
        <location evidence="1">Cell outer membrane</location>
    </subcellularLocation>
</comment>
<comment type="similarity">
    <text evidence="1">Belongs to the BamA family.</text>
</comment>
<feature type="signal peptide" evidence="1">
    <location>
        <begin position="1"/>
        <end position="19"/>
    </location>
</feature>
<feature type="chain" id="PRO_0000033468" description="Outer membrane protein assembly factor BamA">
    <location>
        <begin position="20"/>
        <end position="795"/>
    </location>
</feature>
<feature type="domain" description="POTRA 1" evidence="2">
    <location>
        <begin position="22"/>
        <end position="89"/>
    </location>
</feature>
<feature type="domain" description="POTRA 2" evidence="2">
    <location>
        <begin position="90"/>
        <end position="170"/>
    </location>
</feature>
<feature type="domain" description="POTRA 3" evidence="2">
    <location>
        <begin position="173"/>
        <end position="259"/>
    </location>
</feature>
<feature type="domain" description="POTRA 4" evidence="2">
    <location>
        <begin position="262"/>
        <end position="341"/>
    </location>
</feature>
<feature type="domain" description="POTRA 5" evidence="2">
    <location>
        <begin position="344"/>
        <end position="418"/>
    </location>
</feature>
<feature type="helix" evidence="3">
    <location>
        <begin position="35"/>
        <end position="43"/>
    </location>
</feature>
<feature type="strand" evidence="3">
    <location>
        <begin position="50"/>
        <end position="52"/>
    </location>
</feature>
<feature type="helix" evidence="3">
    <location>
        <begin position="54"/>
        <end position="66"/>
    </location>
</feature>
<feature type="strand" evidence="3">
    <location>
        <begin position="70"/>
        <end position="78"/>
    </location>
</feature>
<feature type="strand" evidence="3">
    <location>
        <begin position="81"/>
        <end position="88"/>
    </location>
</feature>
<feature type="strand" evidence="3">
    <location>
        <begin position="91"/>
        <end position="99"/>
    </location>
</feature>
<feature type="helix" evidence="3">
    <location>
        <begin position="105"/>
        <end position="114"/>
    </location>
</feature>
<feature type="strand" evidence="3">
    <location>
        <begin position="118"/>
        <end position="122"/>
    </location>
</feature>
<feature type="helix" evidence="3">
    <location>
        <begin position="125"/>
        <end position="141"/>
    </location>
</feature>
<feature type="strand" evidence="3">
    <location>
        <begin position="148"/>
        <end position="156"/>
    </location>
</feature>
<feature type="turn" evidence="3">
    <location>
        <begin position="157"/>
        <end position="159"/>
    </location>
</feature>
<feature type="strand" evidence="3">
    <location>
        <begin position="160"/>
        <end position="171"/>
    </location>
</feature>
<feature type="strand" evidence="3">
    <location>
        <begin position="175"/>
        <end position="182"/>
    </location>
</feature>
<feature type="strand" evidence="3">
    <location>
        <begin position="184"/>
        <end position="186"/>
    </location>
</feature>
<feature type="helix" evidence="3">
    <location>
        <begin position="188"/>
        <end position="191"/>
    </location>
</feature>
<feature type="turn" evidence="3">
    <location>
        <begin position="211"/>
        <end position="213"/>
    </location>
</feature>
<feature type="helix" evidence="3">
    <location>
        <begin position="214"/>
        <end position="227"/>
    </location>
</feature>
<feature type="strand" evidence="3">
    <location>
        <begin position="235"/>
        <end position="242"/>
    </location>
</feature>
<feature type="strand" evidence="3">
    <location>
        <begin position="245"/>
        <end position="248"/>
    </location>
</feature>
<feature type="strand" evidence="3">
    <location>
        <begin position="250"/>
        <end position="257"/>
    </location>
</feature>
<feature type="strand" evidence="3">
    <location>
        <begin position="263"/>
        <end position="271"/>
    </location>
</feature>
<feature type="helix" evidence="3">
    <location>
        <begin position="277"/>
        <end position="280"/>
    </location>
</feature>
<feature type="helix" evidence="3">
    <location>
        <begin position="281"/>
        <end position="283"/>
    </location>
</feature>
<feature type="strand" evidence="3">
    <location>
        <begin position="289"/>
        <end position="292"/>
    </location>
</feature>
<feature type="helix" evidence="3">
    <location>
        <begin position="295"/>
        <end position="311"/>
    </location>
</feature>
<feature type="strand" evidence="3">
    <location>
        <begin position="318"/>
        <end position="322"/>
    </location>
</feature>
<feature type="turn" evidence="3">
    <location>
        <begin position="327"/>
        <end position="330"/>
    </location>
</feature>
<feature type="strand" evidence="3">
    <location>
        <begin position="331"/>
        <end position="339"/>
    </location>
</feature>
<protein>
    <recommendedName>
        <fullName evidence="1">Outer membrane protein assembly factor BamA</fullName>
    </recommendedName>
    <alternativeName>
        <fullName>80 kDa D15 antigen</fullName>
        <shortName>D-15-Ag</shortName>
    </alternativeName>
    <alternativeName>
        <fullName>Outer membrane protein D15</fullName>
    </alternativeName>
    <alternativeName>
        <fullName>Protective surface antigen D15</fullName>
    </alternativeName>
</protein>
<organism>
    <name type="scientific">Haemophilus influenzae (strain ATCC 51907 / DSM 11121 / KW20 / Rd)</name>
    <dbReference type="NCBI Taxonomy" id="71421"/>
    <lineage>
        <taxon>Bacteria</taxon>
        <taxon>Pseudomonadati</taxon>
        <taxon>Pseudomonadota</taxon>
        <taxon>Gammaproteobacteria</taxon>
        <taxon>Pasteurellales</taxon>
        <taxon>Pasteurellaceae</taxon>
        <taxon>Haemophilus</taxon>
    </lineage>
</organism>
<gene>
    <name evidence="1" type="primary">bamA</name>
    <name type="ordered locus">HI_0917</name>
</gene>
<name>BAMA_HAEIN</name>